<dbReference type="EMBL" id="CP001896">
    <property type="protein sequence ID" value="ADC61039.1"/>
    <property type="molecule type" value="Genomic_DNA"/>
</dbReference>
<dbReference type="EMBL" id="L01112">
    <property type="protein sequence ID" value="AAA23326.1"/>
    <property type="molecule type" value="Genomic_DNA"/>
</dbReference>
<dbReference type="SMR" id="P45371"/>
<dbReference type="STRING" id="572477.Alvin_0067"/>
<dbReference type="KEGG" id="alv:Alvin_0067"/>
<dbReference type="eggNOG" id="COG0327">
    <property type="taxonomic scope" value="Bacteria"/>
</dbReference>
<dbReference type="HOGENOM" id="CLU_037423_3_0_6"/>
<dbReference type="OrthoDB" id="9800881at2"/>
<dbReference type="Proteomes" id="UP000001441">
    <property type="component" value="Chromosome"/>
</dbReference>
<dbReference type="GO" id="GO:0005737">
    <property type="term" value="C:cytoplasm"/>
    <property type="evidence" value="ECO:0007669"/>
    <property type="project" value="TreeGrafter"/>
</dbReference>
<dbReference type="GO" id="GO:0046872">
    <property type="term" value="F:metal ion binding"/>
    <property type="evidence" value="ECO:0007669"/>
    <property type="project" value="UniProtKB-KW"/>
</dbReference>
<dbReference type="FunFam" id="3.40.1390.30:FF:000002">
    <property type="entry name" value="Nif3-like dinuclear metal center protein"/>
    <property type="match status" value="1"/>
</dbReference>
<dbReference type="Gene3D" id="3.40.1390.30">
    <property type="entry name" value="NIF3 (NGG1p interacting factor 3)-like"/>
    <property type="match status" value="2"/>
</dbReference>
<dbReference type="InterPro" id="IPR002678">
    <property type="entry name" value="DUF34/NIF3"/>
</dbReference>
<dbReference type="InterPro" id="IPR036069">
    <property type="entry name" value="DUF34/NIF3_sf"/>
</dbReference>
<dbReference type="NCBIfam" id="TIGR00486">
    <property type="entry name" value="YbgI_SA1388"/>
    <property type="match status" value="1"/>
</dbReference>
<dbReference type="PANTHER" id="PTHR13799:SF14">
    <property type="entry name" value="GTP CYCLOHYDROLASE 1 TYPE 2 HOMOLOG"/>
    <property type="match status" value="1"/>
</dbReference>
<dbReference type="PANTHER" id="PTHR13799">
    <property type="entry name" value="NGG1 INTERACTING FACTOR 3"/>
    <property type="match status" value="1"/>
</dbReference>
<dbReference type="Pfam" id="PF01784">
    <property type="entry name" value="DUF34_NIF3"/>
    <property type="match status" value="1"/>
</dbReference>
<dbReference type="SUPFAM" id="SSF102705">
    <property type="entry name" value="NIF3 (NGG1p interacting factor 3)-like"/>
    <property type="match status" value="1"/>
</dbReference>
<proteinExistence type="inferred from homology"/>
<protein>
    <recommendedName>
        <fullName>GTP cyclohydrolase 1 type 2 homolog</fullName>
    </recommendedName>
    <alternativeName>
        <fullName>ORF7</fullName>
    </alternativeName>
</protein>
<keyword id="KW-0479">Metal-binding</keyword>
<keyword id="KW-1185">Reference proteome</keyword>
<evidence type="ECO:0000250" key="1">
    <source>
        <dbReference type="UniProtKB" id="P0AFP6"/>
    </source>
</evidence>
<evidence type="ECO:0000305" key="2"/>
<accession>P45371</accession>
<accession>D3RUZ0</accession>
<organism>
    <name type="scientific">Allochromatium vinosum (strain ATCC 17899 / DSM 180 / NBRC 103801 / NCIMB 10441 / D)</name>
    <name type="common">Chromatium vinosum</name>
    <dbReference type="NCBI Taxonomy" id="572477"/>
    <lineage>
        <taxon>Bacteria</taxon>
        <taxon>Pseudomonadati</taxon>
        <taxon>Pseudomonadota</taxon>
        <taxon>Gammaproteobacteria</taxon>
        <taxon>Chromatiales</taxon>
        <taxon>Chromatiaceae</taxon>
        <taxon>Allochromatium</taxon>
    </lineage>
</organism>
<feature type="chain" id="PRO_0000147345" description="GTP cyclohydrolase 1 type 2 homolog">
    <location>
        <begin position="1"/>
        <end position="254"/>
    </location>
</feature>
<feature type="binding site" evidence="1">
    <location>
        <position position="68"/>
    </location>
    <ligand>
        <name>a divalent metal cation</name>
        <dbReference type="ChEBI" id="CHEBI:60240"/>
        <label>1</label>
    </ligand>
</feature>
<feature type="binding site" evidence="1">
    <location>
        <position position="69"/>
    </location>
    <ligand>
        <name>a divalent metal cation</name>
        <dbReference type="ChEBI" id="CHEBI:60240"/>
        <label>2</label>
    </ligand>
</feature>
<feature type="binding site" evidence="1">
    <location>
        <position position="106"/>
    </location>
    <ligand>
        <name>a divalent metal cation</name>
        <dbReference type="ChEBI" id="CHEBI:60240"/>
        <label>1</label>
    </ligand>
</feature>
<feature type="binding site" evidence="1">
    <location>
        <position position="222"/>
    </location>
    <ligand>
        <name>a divalent metal cation</name>
        <dbReference type="ChEBI" id="CHEBI:60240"/>
        <label>2</label>
    </ligand>
</feature>
<feature type="binding site" evidence="1">
    <location>
        <position position="226"/>
    </location>
    <ligand>
        <name>a divalent metal cation</name>
        <dbReference type="ChEBI" id="CHEBI:60240"/>
        <label>1</label>
    </ligand>
</feature>
<feature type="binding site" evidence="1">
    <location>
        <position position="226"/>
    </location>
    <ligand>
        <name>a divalent metal cation</name>
        <dbReference type="ChEBI" id="CHEBI:60240"/>
        <label>2</label>
    </ligand>
</feature>
<feature type="sequence conflict" description="In Ref. 2; AAA23326." evidence="2" ref="2">
    <original>VGRLAQPMTPASFTEHVSQ</original>
    <variation>AAIGSAHDACVLHGACLAS</variation>
    <location>
        <begin position="138"/>
        <end position="156"/>
    </location>
</feature>
<sequence>MNAVMTDVRDLIRYCDDVLDAARFADYAPNGLQVEGERPLQRLVSGVTASAALIEAAIAEHADAILVHHGWFWKNENPCLIGIKGQRARTLLSAGVSLIAYHLPLDAHPELGNNATLGRRLDFIDMEPTALANGLLWVGRLAQPMTPASFTEHVSQRLARPALRVGRETGSIERVAWCTGGCQGYIEQAASLGVDAFLSGELSEQTTHQARELGLCYLAAGHHATERYGVQALGKHLAERFGLWHRFVEIDNPA</sequence>
<comment type="subunit">
    <text evidence="1">Homohexamer.</text>
</comment>
<comment type="similarity">
    <text evidence="2">Belongs to the GTP cyclohydrolase I type 2/NIF3 family.</text>
</comment>
<name>GCH1L_ALLVD</name>
<reference key="1">
    <citation type="journal article" date="2011" name="Stand. Genomic Sci.">
        <title>Complete genome sequence of Allochromatium vinosum DSM 180(T).</title>
        <authorList>
            <person name="Weissgerber T."/>
            <person name="Zigann R."/>
            <person name="Bruce D."/>
            <person name="Chang Y.J."/>
            <person name="Detter J.C."/>
            <person name="Han C."/>
            <person name="Hauser L."/>
            <person name="Jeffries C.D."/>
            <person name="Land M."/>
            <person name="Munk A.C."/>
            <person name="Tapia R."/>
            <person name="Dahl C."/>
        </authorList>
    </citation>
    <scope>NUCLEOTIDE SEQUENCE [LARGE SCALE GENOMIC DNA]</scope>
    <source>
        <strain>ATCC 17899 / DSM 180 / NBRC 103801 / NCIMB 10441 / D</strain>
    </source>
</reference>
<reference key="2">
    <citation type="journal article" date="1992" name="Eur. J. Biochem.">
        <title>Cloning and nucleotide sequences of genes relevant for biosynthesis of poly(3-hydroxybutyric acid) in Chromatium vinosum strain D.</title>
        <authorList>
            <person name="Liebergesell M."/>
            <person name="Steinbuechel A."/>
        </authorList>
    </citation>
    <scope>NUCLEOTIDE SEQUENCE [GENOMIC DNA] OF 1-156</scope>
    <source>
        <strain>ATCC 17899 / DSM 180 / NBRC 103801 / NCIMB 10441 / D</strain>
    </source>
</reference>
<gene>
    <name type="ordered locus">Alvin_0067</name>
</gene>